<reference key="1">
    <citation type="submission" date="2009-03" db="EMBL/GenBank/DDBJ databases">
        <title>Comparison of the complete genome sequences of Rhodococcus erythropolis PR4 and Rhodococcus opacus B4.</title>
        <authorList>
            <person name="Takarada H."/>
            <person name="Sekine M."/>
            <person name="Hosoyama A."/>
            <person name="Yamada R."/>
            <person name="Fujisawa T."/>
            <person name="Omata S."/>
            <person name="Shimizu A."/>
            <person name="Tsukatani N."/>
            <person name="Tanikawa S."/>
            <person name="Fujita N."/>
            <person name="Harayama S."/>
        </authorList>
    </citation>
    <scope>NUCLEOTIDE SEQUENCE [LARGE SCALE GENOMIC DNA]</scope>
    <source>
        <strain>B4</strain>
    </source>
</reference>
<sequence length="226" mass="23749">MTSWPPRIVIRRSSGLRTMESALVRSGLGPVAGVDEAGRGACAGPLVVAACVLAPKPYPALARLDDSKKLTERTREELFPAITRLAVAWSVVSFPADEVDRMGVHVANIEGMRRAVAGLTTTPGYVLTDGFRVPGLPAPSLPVIGGDAAAACIAAASVLAKVSRDRVMVAMDETHPGYGFAIHKGYNTPAHLAALEVLGPCPEHRRSWSNVAALLHRVDNSSGSAR</sequence>
<keyword id="KW-0963">Cytoplasm</keyword>
<keyword id="KW-0255">Endonuclease</keyword>
<keyword id="KW-0378">Hydrolase</keyword>
<keyword id="KW-0464">Manganese</keyword>
<keyword id="KW-0479">Metal-binding</keyword>
<keyword id="KW-0540">Nuclease</keyword>
<proteinExistence type="inferred from homology"/>
<gene>
    <name evidence="1" type="primary">rnhB</name>
    <name type="ordered locus">ROP_65960</name>
</gene>
<evidence type="ECO:0000255" key="1">
    <source>
        <dbReference type="HAMAP-Rule" id="MF_00052"/>
    </source>
</evidence>
<evidence type="ECO:0000255" key="2">
    <source>
        <dbReference type="PROSITE-ProRule" id="PRU01319"/>
    </source>
</evidence>
<dbReference type="EC" id="3.1.26.4" evidence="1"/>
<dbReference type="EMBL" id="AP011115">
    <property type="protein sequence ID" value="BAH54843.1"/>
    <property type="molecule type" value="Genomic_DNA"/>
</dbReference>
<dbReference type="RefSeq" id="WP_015890284.1">
    <property type="nucleotide sequence ID" value="NC_012522.1"/>
</dbReference>
<dbReference type="SMR" id="C1B2S6"/>
<dbReference type="STRING" id="632772.ROP_65960"/>
<dbReference type="KEGG" id="rop:ROP_65960"/>
<dbReference type="PATRIC" id="fig|632772.20.peg.6882"/>
<dbReference type="HOGENOM" id="CLU_036532_1_0_11"/>
<dbReference type="OrthoDB" id="9803420at2"/>
<dbReference type="Proteomes" id="UP000002212">
    <property type="component" value="Chromosome"/>
</dbReference>
<dbReference type="GO" id="GO:0005737">
    <property type="term" value="C:cytoplasm"/>
    <property type="evidence" value="ECO:0007669"/>
    <property type="project" value="UniProtKB-SubCell"/>
</dbReference>
<dbReference type="GO" id="GO:0032299">
    <property type="term" value="C:ribonuclease H2 complex"/>
    <property type="evidence" value="ECO:0007669"/>
    <property type="project" value="TreeGrafter"/>
</dbReference>
<dbReference type="GO" id="GO:0030145">
    <property type="term" value="F:manganese ion binding"/>
    <property type="evidence" value="ECO:0007669"/>
    <property type="project" value="UniProtKB-UniRule"/>
</dbReference>
<dbReference type="GO" id="GO:0003723">
    <property type="term" value="F:RNA binding"/>
    <property type="evidence" value="ECO:0007669"/>
    <property type="project" value="InterPro"/>
</dbReference>
<dbReference type="GO" id="GO:0004523">
    <property type="term" value="F:RNA-DNA hybrid ribonuclease activity"/>
    <property type="evidence" value="ECO:0007669"/>
    <property type="project" value="UniProtKB-UniRule"/>
</dbReference>
<dbReference type="GO" id="GO:0043137">
    <property type="term" value="P:DNA replication, removal of RNA primer"/>
    <property type="evidence" value="ECO:0007669"/>
    <property type="project" value="TreeGrafter"/>
</dbReference>
<dbReference type="GO" id="GO:0006298">
    <property type="term" value="P:mismatch repair"/>
    <property type="evidence" value="ECO:0007669"/>
    <property type="project" value="TreeGrafter"/>
</dbReference>
<dbReference type="CDD" id="cd07182">
    <property type="entry name" value="RNase_HII_bacteria_HII_like"/>
    <property type="match status" value="1"/>
</dbReference>
<dbReference type="FunFam" id="3.30.420.10:FF:000113">
    <property type="entry name" value="Ribonuclease HII"/>
    <property type="match status" value="1"/>
</dbReference>
<dbReference type="Gene3D" id="3.30.420.10">
    <property type="entry name" value="Ribonuclease H-like superfamily/Ribonuclease H"/>
    <property type="match status" value="1"/>
</dbReference>
<dbReference type="HAMAP" id="MF_00052_B">
    <property type="entry name" value="RNase_HII_B"/>
    <property type="match status" value="1"/>
</dbReference>
<dbReference type="InterPro" id="IPR022898">
    <property type="entry name" value="RNase_HII"/>
</dbReference>
<dbReference type="InterPro" id="IPR001352">
    <property type="entry name" value="RNase_HII/HIII"/>
</dbReference>
<dbReference type="InterPro" id="IPR024567">
    <property type="entry name" value="RNase_HII/HIII_dom"/>
</dbReference>
<dbReference type="InterPro" id="IPR012337">
    <property type="entry name" value="RNaseH-like_sf"/>
</dbReference>
<dbReference type="InterPro" id="IPR036397">
    <property type="entry name" value="RNaseH_sf"/>
</dbReference>
<dbReference type="NCBIfam" id="NF000595">
    <property type="entry name" value="PRK00015.1-3"/>
    <property type="match status" value="1"/>
</dbReference>
<dbReference type="NCBIfam" id="NF000598">
    <property type="entry name" value="PRK00015.2-2"/>
    <property type="match status" value="1"/>
</dbReference>
<dbReference type="NCBIfam" id="NF000600">
    <property type="entry name" value="PRK00015.2-4"/>
    <property type="match status" value="1"/>
</dbReference>
<dbReference type="PANTHER" id="PTHR10954">
    <property type="entry name" value="RIBONUCLEASE H2 SUBUNIT A"/>
    <property type="match status" value="1"/>
</dbReference>
<dbReference type="PANTHER" id="PTHR10954:SF18">
    <property type="entry name" value="RIBONUCLEASE HII"/>
    <property type="match status" value="1"/>
</dbReference>
<dbReference type="Pfam" id="PF01351">
    <property type="entry name" value="RNase_HII"/>
    <property type="match status" value="1"/>
</dbReference>
<dbReference type="SUPFAM" id="SSF53098">
    <property type="entry name" value="Ribonuclease H-like"/>
    <property type="match status" value="1"/>
</dbReference>
<dbReference type="PROSITE" id="PS51975">
    <property type="entry name" value="RNASE_H_2"/>
    <property type="match status" value="1"/>
</dbReference>
<feature type="chain" id="PRO_1000117681" description="Ribonuclease HII">
    <location>
        <begin position="1"/>
        <end position="226"/>
    </location>
</feature>
<feature type="domain" description="RNase H type-2" evidence="2">
    <location>
        <begin position="29"/>
        <end position="220"/>
    </location>
</feature>
<feature type="binding site" evidence="1">
    <location>
        <position position="35"/>
    </location>
    <ligand>
        <name>a divalent metal cation</name>
        <dbReference type="ChEBI" id="CHEBI:60240"/>
    </ligand>
</feature>
<feature type="binding site" evidence="1">
    <location>
        <position position="36"/>
    </location>
    <ligand>
        <name>a divalent metal cation</name>
        <dbReference type="ChEBI" id="CHEBI:60240"/>
    </ligand>
</feature>
<feature type="binding site" evidence="1">
    <location>
        <position position="129"/>
    </location>
    <ligand>
        <name>a divalent metal cation</name>
        <dbReference type="ChEBI" id="CHEBI:60240"/>
    </ligand>
</feature>
<comment type="function">
    <text evidence="1">Endonuclease that specifically degrades the RNA of RNA-DNA hybrids.</text>
</comment>
<comment type="catalytic activity">
    <reaction evidence="1">
        <text>Endonucleolytic cleavage to 5'-phosphomonoester.</text>
        <dbReference type="EC" id="3.1.26.4"/>
    </reaction>
</comment>
<comment type="cofactor">
    <cofactor evidence="1">
        <name>Mn(2+)</name>
        <dbReference type="ChEBI" id="CHEBI:29035"/>
    </cofactor>
    <cofactor evidence="1">
        <name>Mg(2+)</name>
        <dbReference type="ChEBI" id="CHEBI:18420"/>
    </cofactor>
    <text evidence="1">Manganese or magnesium. Binds 1 divalent metal ion per monomer in the absence of substrate. May bind a second metal ion after substrate binding.</text>
</comment>
<comment type="subcellular location">
    <subcellularLocation>
        <location evidence="1">Cytoplasm</location>
    </subcellularLocation>
</comment>
<comment type="similarity">
    <text evidence="1">Belongs to the RNase HII family.</text>
</comment>
<name>RNH2_RHOOB</name>
<accession>C1B2S6</accession>
<organism>
    <name type="scientific">Rhodococcus opacus (strain B4)</name>
    <dbReference type="NCBI Taxonomy" id="632772"/>
    <lineage>
        <taxon>Bacteria</taxon>
        <taxon>Bacillati</taxon>
        <taxon>Actinomycetota</taxon>
        <taxon>Actinomycetes</taxon>
        <taxon>Mycobacteriales</taxon>
        <taxon>Nocardiaceae</taxon>
        <taxon>Rhodococcus</taxon>
    </lineage>
</organism>
<protein>
    <recommendedName>
        <fullName evidence="1">Ribonuclease HII</fullName>
        <shortName evidence="1">RNase HII</shortName>
        <ecNumber evidence="1">3.1.26.4</ecNumber>
    </recommendedName>
</protein>